<dbReference type="EC" id="3.1.1.96" evidence="1"/>
<dbReference type="EMBL" id="CP000569">
    <property type="protein sequence ID" value="ABN75027.1"/>
    <property type="molecule type" value="Genomic_DNA"/>
</dbReference>
<dbReference type="RefSeq" id="WP_005602846.1">
    <property type="nucleotide sequence ID" value="NC_009053.1"/>
</dbReference>
<dbReference type="SMR" id="A3N3P1"/>
<dbReference type="STRING" id="416269.APL_1949"/>
<dbReference type="EnsemblBacteria" id="ABN75027">
    <property type="protein sequence ID" value="ABN75027"/>
    <property type="gene ID" value="APL_1949"/>
</dbReference>
<dbReference type="KEGG" id="apl:APL_1949"/>
<dbReference type="eggNOG" id="COG1490">
    <property type="taxonomic scope" value="Bacteria"/>
</dbReference>
<dbReference type="HOGENOM" id="CLU_076901_1_1_6"/>
<dbReference type="Proteomes" id="UP000001432">
    <property type="component" value="Chromosome"/>
</dbReference>
<dbReference type="GO" id="GO:0005737">
    <property type="term" value="C:cytoplasm"/>
    <property type="evidence" value="ECO:0007669"/>
    <property type="project" value="UniProtKB-SubCell"/>
</dbReference>
<dbReference type="GO" id="GO:0051500">
    <property type="term" value="F:D-tyrosyl-tRNA(Tyr) deacylase activity"/>
    <property type="evidence" value="ECO:0007669"/>
    <property type="project" value="TreeGrafter"/>
</dbReference>
<dbReference type="GO" id="GO:0106026">
    <property type="term" value="F:Gly-tRNA(Ala) deacylase activity"/>
    <property type="evidence" value="ECO:0007669"/>
    <property type="project" value="UniProtKB-UniRule"/>
</dbReference>
<dbReference type="GO" id="GO:0043908">
    <property type="term" value="F:Ser(Gly)-tRNA(Ala) hydrolase activity"/>
    <property type="evidence" value="ECO:0007669"/>
    <property type="project" value="UniProtKB-UniRule"/>
</dbReference>
<dbReference type="GO" id="GO:0000049">
    <property type="term" value="F:tRNA binding"/>
    <property type="evidence" value="ECO:0007669"/>
    <property type="project" value="UniProtKB-UniRule"/>
</dbReference>
<dbReference type="GO" id="GO:0019478">
    <property type="term" value="P:D-amino acid catabolic process"/>
    <property type="evidence" value="ECO:0007669"/>
    <property type="project" value="UniProtKB-UniRule"/>
</dbReference>
<dbReference type="CDD" id="cd00563">
    <property type="entry name" value="Dtyr_deacylase"/>
    <property type="match status" value="1"/>
</dbReference>
<dbReference type="FunFam" id="3.50.80.10:FF:000001">
    <property type="entry name" value="D-aminoacyl-tRNA deacylase"/>
    <property type="match status" value="1"/>
</dbReference>
<dbReference type="Gene3D" id="3.50.80.10">
    <property type="entry name" value="D-tyrosyl-tRNA(Tyr) deacylase"/>
    <property type="match status" value="1"/>
</dbReference>
<dbReference type="HAMAP" id="MF_00518">
    <property type="entry name" value="Deacylase_Dtd"/>
    <property type="match status" value="1"/>
</dbReference>
<dbReference type="InterPro" id="IPR003732">
    <property type="entry name" value="Daa-tRNA_deacyls_DTD"/>
</dbReference>
<dbReference type="InterPro" id="IPR023509">
    <property type="entry name" value="DTD-like_sf"/>
</dbReference>
<dbReference type="NCBIfam" id="TIGR00256">
    <property type="entry name" value="D-aminoacyl-tRNA deacylase"/>
    <property type="match status" value="1"/>
</dbReference>
<dbReference type="PANTHER" id="PTHR10472:SF5">
    <property type="entry name" value="D-AMINOACYL-TRNA DEACYLASE 1"/>
    <property type="match status" value="1"/>
</dbReference>
<dbReference type="PANTHER" id="PTHR10472">
    <property type="entry name" value="D-TYROSYL-TRNA TYR DEACYLASE"/>
    <property type="match status" value="1"/>
</dbReference>
<dbReference type="Pfam" id="PF02580">
    <property type="entry name" value="Tyr_Deacylase"/>
    <property type="match status" value="1"/>
</dbReference>
<dbReference type="SUPFAM" id="SSF69500">
    <property type="entry name" value="DTD-like"/>
    <property type="match status" value="1"/>
</dbReference>
<name>DTD_ACTP2</name>
<proteinExistence type="inferred from homology"/>
<reference key="1">
    <citation type="journal article" date="2008" name="J. Bacteriol.">
        <title>The complete genome sequence of Actinobacillus pleuropneumoniae L20 (serotype 5b).</title>
        <authorList>
            <person name="Foote S.J."/>
            <person name="Bosse J.T."/>
            <person name="Bouevitch A.B."/>
            <person name="Langford P.R."/>
            <person name="Young N.M."/>
            <person name="Nash J.H.E."/>
        </authorList>
    </citation>
    <scope>NUCLEOTIDE SEQUENCE [LARGE SCALE GENOMIC DNA]</scope>
    <source>
        <strain>L20</strain>
    </source>
</reference>
<comment type="function">
    <text evidence="1">An aminoacyl-tRNA editing enzyme that deacylates mischarged D-aminoacyl-tRNAs. Also deacylates mischarged glycyl-tRNA(Ala), protecting cells against glycine mischarging by AlaRS. Acts via tRNA-based rather than protein-based catalysis; rejects L-amino acids rather than detecting D-amino acids in the active site. By recycling D-aminoacyl-tRNA to D-amino acids and free tRNA molecules, this enzyme counteracts the toxicity associated with the formation of D-aminoacyl-tRNA entities in vivo and helps enforce protein L-homochirality.</text>
</comment>
<comment type="catalytic activity">
    <reaction evidence="1">
        <text>glycyl-tRNA(Ala) + H2O = tRNA(Ala) + glycine + H(+)</text>
        <dbReference type="Rhea" id="RHEA:53744"/>
        <dbReference type="Rhea" id="RHEA-COMP:9657"/>
        <dbReference type="Rhea" id="RHEA-COMP:13640"/>
        <dbReference type="ChEBI" id="CHEBI:15377"/>
        <dbReference type="ChEBI" id="CHEBI:15378"/>
        <dbReference type="ChEBI" id="CHEBI:57305"/>
        <dbReference type="ChEBI" id="CHEBI:78442"/>
        <dbReference type="ChEBI" id="CHEBI:78522"/>
        <dbReference type="EC" id="3.1.1.96"/>
    </reaction>
</comment>
<comment type="catalytic activity">
    <reaction evidence="1">
        <text>a D-aminoacyl-tRNA + H2O = a tRNA + a D-alpha-amino acid + H(+)</text>
        <dbReference type="Rhea" id="RHEA:13953"/>
        <dbReference type="Rhea" id="RHEA-COMP:10123"/>
        <dbReference type="Rhea" id="RHEA-COMP:10124"/>
        <dbReference type="ChEBI" id="CHEBI:15377"/>
        <dbReference type="ChEBI" id="CHEBI:15378"/>
        <dbReference type="ChEBI" id="CHEBI:59871"/>
        <dbReference type="ChEBI" id="CHEBI:78442"/>
        <dbReference type="ChEBI" id="CHEBI:79333"/>
        <dbReference type="EC" id="3.1.1.96"/>
    </reaction>
</comment>
<comment type="subunit">
    <text evidence="1">Homodimer.</text>
</comment>
<comment type="subcellular location">
    <subcellularLocation>
        <location evidence="1">Cytoplasm</location>
    </subcellularLocation>
</comment>
<comment type="domain">
    <text evidence="1">A Gly-cisPro motif from one monomer fits into the active site of the other monomer to allow specific chiral rejection of L-amino acids.</text>
</comment>
<comment type="similarity">
    <text evidence="1">Belongs to the DTD family.</text>
</comment>
<organism>
    <name type="scientific">Actinobacillus pleuropneumoniae serotype 5b (strain L20)</name>
    <dbReference type="NCBI Taxonomy" id="416269"/>
    <lineage>
        <taxon>Bacteria</taxon>
        <taxon>Pseudomonadati</taxon>
        <taxon>Pseudomonadota</taxon>
        <taxon>Gammaproteobacteria</taxon>
        <taxon>Pasteurellales</taxon>
        <taxon>Pasteurellaceae</taxon>
        <taxon>Actinobacillus</taxon>
    </lineage>
</organism>
<protein>
    <recommendedName>
        <fullName evidence="1">D-aminoacyl-tRNA deacylase</fullName>
        <shortName evidence="1">DTD</shortName>
        <ecNumber evidence="1">3.1.1.96</ecNumber>
    </recommendedName>
    <alternativeName>
        <fullName evidence="1">Gly-tRNA(Ala) deacylase</fullName>
    </alternativeName>
</protein>
<evidence type="ECO:0000255" key="1">
    <source>
        <dbReference type="HAMAP-Rule" id="MF_00518"/>
    </source>
</evidence>
<sequence length="144" mass="15862">MIGLIQRVKWAKVEVEGQTVGEITQGLLVLLGVEQGDDQAKADKLLEKVLNYRVFSDEQGKMNLNVQQAGGSLLVVSQFTLAADTNKGLRPSFSRGAAPQEANALYEYFHQQAARKIHTQTGQFAADMQVSLQNDGPVTFWLQI</sequence>
<accession>A3N3P1</accession>
<keyword id="KW-0963">Cytoplasm</keyword>
<keyword id="KW-0378">Hydrolase</keyword>
<keyword id="KW-1185">Reference proteome</keyword>
<keyword id="KW-0694">RNA-binding</keyword>
<keyword id="KW-0820">tRNA-binding</keyword>
<gene>
    <name evidence="1" type="primary">dtd</name>
    <name type="ordered locus">APL_1949</name>
</gene>
<feature type="chain" id="PRO_1000050807" description="D-aminoacyl-tRNA deacylase">
    <location>
        <begin position="1"/>
        <end position="144"/>
    </location>
</feature>
<feature type="short sequence motif" description="Gly-cisPro motif, important for rejection of L-amino acids" evidence="1">
    <location>
        <begin position="136"/>
        <end position="137"/>
    </location>
</feature>